<feature type="chain" id="PRO_0000144896" description="L-aspartate dehydrogenase">
    <location>
        <begin position="1"/>
        <end position="267"/>
    </location>
</feature>
<feature type="active site" evidence="1">
    <location>
        <position position="218"/>
    </location>
</feature>
<feature type="binding site" evidence="1">
    <location>
        <position position="124"/>
    </location>
    <ligand>
        <name>NAD(+)</name>
        <dbReference type="ChEBI" id="CHEBI:57540"/>
    </ligand>
</feature>
<feature type="binding site" evidence="1">
    <location>
        <position position="190"/>
    </location>
    <ligand>
        <name>NAD(+)</name>
        <dbReference type="ChEBI" id="CHEBI:57540"/>
    </ligand>
</feature>
<gene>
    <name evidence="1" type="primary">nadX</name>
    <name type="ordered locus">MJ0915</name>
</gene>
<dbReference type="EC" id="1.4.1.21" evidence="1"/>
<dbReference type="EMBL" id="L77117">
    <property type="protein sequence ID" value="AAB98920.1"/>
    <property type="molecule type" value="Genomic_DNA"/>
</dbReference>
<dbReference type="PIR" id="C64414">
    <property type="entry name" value="C64414"/>
</dbReference>
<dbReference type="RefSeq" id="WP_010870429.1">
    <property type="nucleotide sequence ID" value="NC_000909.1"/>
</dbReference>
<dbReference type="SMR" id="Q58325"/>
<dbReference type="FunCoup" id="Q58325">
    <property type="interactions" value="112"/>
</dbReference>
<dbReference type="STRING" id="243232.MJ_0915"/>
<dbReference type="PaxDb" id="243232-MJ_0915"/>
<dbReference type="EnsemblBacteria" id="AAB98920">
    <property type="protein sequence ID" value="AAB98920"/>
    <property type="gene ID" value="MJ_0915"/>
</dbReference>
<dbReference type="GeneID" id="1451804"/>
<dbReference type="KEGG" id="mja:MJ_0915"/>
<dbReference type="eggNOG" id="arCOG00254">
    <property type="taxonomic scope" value="Archaea"/>
</dbReference>
<dbReference type="HOGENOM" id="CLU_089550_0_0_2"/>
<dbReference type="InParanoid" id="Q58325"/>
<dbReference type="OrthoDB" id="15415at2157"/>
<dbReference type="PhylomeDB" id="Q58325"/>
<dbReference type="UniPathway" id="UPA00253">
    <property type="reaction ID" value="UER00456"/>
</dbReference>
<dbReference type="Proteomes" id="UP000000805">
    <property type="component" value="Chromosome"/>
</dbReference>
<dbReference type="GO" id="GO:0033735">
    <property type="term" value="F:aspartate dehydrogenase activity"/>
    <property type="evidence" value="ECO:0007669"/>
    <property type="project" value="UniProtKB-EC"/>
</dbReference>
<dbReference type="GO" id="GO:0051287">
    <property type="term" value="F:NAD binding"/>
    <property type="evidence" value="ECO:0007669"/>
    <property type="project" value="UniProtKB-UniRule"/>
</dbReference>
<dbReference type="GO" id="GO:0050661">
    <property type="term" value="F:NADP binding"/>
    <property type="evidence" value="ECO:0007669"/>
    <property type="project" value="UniProtKB-UniRule"/>
</dbReference>
<dbReference type="GO" id="GO:0016639">
    <property type="term" value="F:oxidoreductase activity, acting on the CH-NH2 group of donors, NAD or NADP as acceptor"/>
    <property type="evidence" value="ECO:0007669"/>
    <property type="project" value="UniProtKB-UniRule"/>
</dbReference>
<dbReference type="GO" id="GO:0009435">
    <property type="term" value="P:NAD biosynthetic process"/>
    <property type="evidence" value="ECO:0007669"/>
    <property type="project" value="UniProtKB-UniRule"/>
</dbReference>
<dbReference type="Gene3D" id="3.30.360.10">
    <property type="entry name" value="Dihydrodipicolinate Reductase, domain 2"/>
    <property type="match status" value="1"/>
</dbReference>
<dbReference type="Gene3D" id="3.40.50.720">
    <property type="entry name" value="NAD(P)-binding Rossmann-like Domain"/>
    <property type="match status" value="1"/>
</dbReference>
<dbReference type="HAMAP" id="MF_01265">
    <property type="entry name" value="NadX"/>
    <property type="match status" value="1"/>
</dbReference>
<dbReference type="InterPro" id="IPR005106">
    <property type="entry name" value="Asp/hSer_DH_NAD-bd"/>
</dbReference>
<dbReference type="InterPro" id="IPR002811">
    <property type="entry name" value="Asp_DH"/>
</dbReference>
<dbReference type="InterPro" id="IPR022487">
    <property type="entry name" value="Asp_DH_arc"/>
</dbReference>
<dbReference type="InterPro" id="IPR020626">
    <property type="entry name" value="Asp_DH_prok"/>
</dbReference>
<dbReference type="InterPro" id="IPR011182">
    <property type="entry name" value="L-Asp_DH"/>
</dbReference>
<dbReference type="InterPro" id="IPR036291">
    <property type="entry name" value="NAD(P)-bd_dom_sf"/>
</dbReference>
<dbReference type="NCBIfam" id="TIGR03855">
    <property type="entry name" value="NAD_NadX"/>
    <property type="match status" value="1"/>
</dbReference>
<dbReference type="NCBIfam" id="NF009829">
    <property type="entry name" value="PRK13303.1-4"/>
    <property type="match status" value="1"/>
</dbReference>
<dbReference type="NCBIfam" id="NF009830">
    <property type="entry name" value="PRK13304.1"/>
    <property type="match status" value="1"/>
</dbReference>
<dbReference type="PANTHER" id="PTHR31873:SF6">
    <property type="entry name" value="ASPARTATE DEHYDROGENASE DOMAIN-CONTAINING PROTEIN"/>
    <property type="match status" value="1"/>
</dbReference>
<dbReference type="PANTHER" id="PTHR31873">
    <property type="entry name" value="L-ASPARTATE DEHYDROGENASE-RELATED"/>
    <property type="match status" value="1"/>
</dbReference>
<dbReference type="Pfam" id="PF01958">
    <property type="entry name" value="Asp_DH_C"/>
    <property type="match status" value="1"/>
</dbReference>
<dbReference type="Pfam" id="PF03447">
    <property type="entry name" value="NAD_binding_3"/>
    <property type="match status" value="1"/>
</dbReference>
<dbReference type="PIRSF" id="PIRSF005227">
    <property type="entry name" value="Asp_dh_NAD_syn"/>
    <property type="match status" value="1"/>
</dbReference>
<dbReference type="SUPFAM" id="SSF55347">
    <property type="entry name" value="Glyceraldehyde-3-phosphate dehydrogenase-like, C-terminal domain"/>
    <property type="match status" value="1"/>
</dbReference>
<dbReference type="SUPFAM" id="SSF51735">
    <property type="entry name" value="NAD(P)-binding Rossmann-fold domains"/>
    <property type="match status" value="1"/>
</dbReference>
<accession>Q58325</accession>
<evidence type="ECO:0000255" key="1">
    <source>
        <dbReference type="HAMAP-Rule" id="MF_01265"/>
    </source>
</evidence>
<sequence length="267" mass="28755">MLKIGIVGCGAIGNFITKKVLDGTIKNAKISAVYDRNFDKAKTLSERTGAKICSSIDDLVKEDLDLVVEAASIKAVEEIAEKSLINNKDVLIMSVGALADKKLFLKLRDLAKTVGRKIYLPSGAIGGLDAIKALRLGEIEEVVLKTTKPVAALEDALKNLGYKPEDIKNPVIVFEGDVFKAIKEFPANINVSVTLSIAAEFPAKVVIVADPNAKLNKHELFVKSSIGTLRVCIENVPFEENPRTSALAAYSAVRLIRDLAEPVKVGT</sequence>
<proteinExistence type="inferred from homology"/>
<keyword id="KW-0520">NAD</keyword>
<keyword id="KW-0521">NADP</keyword>
<keyword id="KW-0560">Oxidoreductase</keyword>
<keyword id="KW-0662">Pyridine nucleotide biosynthesis</keyword>
<keyword id="KW-1185">Reference proteome</keyword>
<organism>
    <name type="scientific">Methanocaldococcus jannaschii (strain ATCC 43067 / DSM 2661 / JAL-1 / JCM 10045 / NBRC 100440)</name>
    <name type="common">Methanococcus jannaschii</name>
    <dbReference type="NCBI Taxonomy" id="243232"/>
    <lineage>
        <taxon>Archaea</taxon>
        <taxon>Methanobacteriati</taxon>
        <taxon>Methanobacteriota</taxon>
        <taxon>Methanomada group</taxon>
        <taxon>Methanococci</taxon>
        <taxon>Methanococcales</taxon>
        <taxon>Methanocaldococcaceae</taxon>
        <taxon>Methanocaldococcus</taxon>
    </lineage>
</organism>
<reference key="1">
    <citation type="journal article" date="1996" name="Science">
        <title>Complete genome sequence of the methanogenic archaeon, Methanococcus jannaschii.</title>
        <authorList>
            <person name="Bult C.J."/>
            <person name="White O."/>
            <person name="Olsen G.J."/>
            <person name="Zhou L."/>
            <person name="Fleischmann R.D."/>
            <person name="Sutton G.G."/>
            <person name="Blake J.A."/>
            <person name="FitzGerald L.M."/>
            <person name="Clayton R.A."/>
            <person name="Gocayne J.D."/>
            <person name="Kerlavage A.R."/>
            <person name="Dougherty B.A."/>
            <person name="Tomb J.-F."/>
            <person name="Adams M.D."/>
            <person name="Reich C.I."/>
            <person name="Overbeek R."/>
            <person name="Kirkness E.F."/>
            <person name="Weinstock K.G."/>
            <person name="Merrick J.M."/>
            <person name="Glodek A."/>
            <person name="Scott J.L."/>
            <person name="Geoghagen N.S.M."/>
            <person name="Weidman J.F."/>
            <person name="Fuhrmann J.L."/>
            <person name="Nguyen D."/>
            <person name="Utterback T.R."/>
            <person name="Kelley J.M."/>
            <person name="Peterson J.D."/>
            <person name="Sadow P.W."/>
            <person name="Hanna M.C."/>
            <person name="Cotton M.D."/>
            <person name="Roberts K.M."/>
            <person name="Hurst M.A."/>
            <person name="Kaine B.P."/>
            <person name="Borodovsky M."/>
            <person name="Klenk H.-P."/>
            <person name="Fraser C.M."/>
            <person name="Smith H.O."/>
            <person name="Woese C.R."/>
            <person name="Venter J.C."/>
        </authorList>
    </citation>
    <scope>NUCLEOTIDE SEQUENCE [LARGE SCALE GENOMIC DNA]</scope>
    <source>
        <strain>ATCC 43067 / DSM 2661 / JAL-1 / JCM 10045 / NBRC 100440</strain>
    </source>
</reference>
<name>ASPD_METJA</name>
<comment type="function">
    <text evidence="1">Specifically catalyzes the NAD or NADP-dependent dehydrogenation of L-aspartate to iminoaspartate.</text>
</comment>
<comment type="catalytic activity">
    <reaction evidence="1">
        <text>L-aspartate + NADP(+) + H2O = oxaloacetate + NH4(+) + NADPH + H(+)</text>
        <dbReference type="Rhea" id="RHEA:11784"/>
        <dbReference type="ChEBI" id="CHEBI:15377"/>
        <dbReference type="ChEBI" id="CHEBI:15378"/>
        <dbReference type="ChEBI" id="CHEBI:16452"/>
        <dbReference type="ChEBI" id="CHEBI:28938"/>
        <dbReference type="ChEBI" id="CHEBI:29991"/>
        <dbReference type="ChEBI" id="CHEBI:57783"/>
        <dbReference type="ChEBI" id="CHEBI:58349"/>
        <dbReference type="EC" id="1.4.1.21"/>
    </reaction>
</comment>
<comment type="catalytic activity">
    <reaction evidence="1">
        <text>L-aspartate + NAD(+) + H2O = oxaloacetate + NH4(+) + NADH + H(+)</text>
        <dbReference type="Rhea" id="RHEA:11788"/>
        <dbReference type="ChEBI" id="CHEBI:15377"/>
        <dbReference type="ChEBI" id="CHEBI:15378"/>
        <dbReference type="ChEBI" id="CHEBI:16452"/>
        <dbReference type="ChEBI" id="CHEBI:28938"/>
        <dbReference type="ChEBI" id="CHEBI:29991"/>
        <dbReference type="ChEBI" id="CHEBI:57540"/>
        <dbReference type="ChEBI" id="CHEBI:57945"/>
        <dbReference type="EC" id="1.4.1.21"/>
    </reaction>
</comment>
<comment type="pathway">
    <text evidence="1">Cofactor biosynthesis; NAD(+) biosynthesis; iminoaspartate from L-aspartate (dehydrogenase route): step 1/1.</text>
</comment>
<comment type="miscellaneous">
    <text evidence="1">The iminoaspartate product is unstable in aqueous solution and can decompose to oxaloacetate and ammonia.</text>
</comment>
<comment type="similarity">
    <text evidence="1">Belongs to the L-aspartate dehydrogenase family.</text>
</comment>
<protein>
    <recommendedName>
        <fullName evidence="1">L-aspartate dehydrogenase</fullName>
        <ecNumber evidence="1">1.4.1.21</ecNumber>
    </recommendedName>
</protein>